<proteinExistence type="inferred from homology"/>
<feature type="chain" id="PRO_0000329358" description="Adenine phosphoribosyltransferase">
    <location>
        <begin position="1"/>
        <end position="174"/>
    </location>
</feature>
<dbReference type="EC" id="2.4.2.7" evidence="1"/>
<dbReference type="EMBL" id="CP000580">
    <property type="protein sequence ID" value="ABN98104.1"/>
    <property type="molecule type" value="Genomic_DNA"/>
</dbReference>
<dbReference type="SMR" id="A3PYX7"/>
<dbReference type="KEGG" id="mjl:Mjls_2318"/>
<dbReference type="HOGENOM" id="CLU_063339_3_3_11"/>
<dbReference type="BioCyc" id="MSP164757:G1G8C-2337-MONOMER"/>
<dbReference type="UniPathway" id="UPA00588">
    <property type="reaction ID" value="UER00646"/>
</dbReference>
<dbReference type="GO" id="GO:0005737">
    <property type="term" value="C:cytoplasm"/>
    <property type="evidence" value="ECO:0007669"/>
    <property type="project" value="UniProtKB-SubCell"/>
</dbReference>
<dbReference type="GO" id="GO:0002055">
    <property type="term" value="F:adenine binding"/>
    <property type="evidence" value="ECO:0007669"/>
    <property type="project" value="TreeGrafter"/>
</dbReference>
<dbReference type="GO" id="GO:0003999">
    <property type="term" value="F:adenine phosphoribosyltransferase activity"/>
    <property type="evidence" value="ECO:0007669"/>
    <property type="project" value="UniProtKB-UniRule"/>
</dbReference>
<dbReference type="GO" id="GO:0016208">
    <property type="term" value="F:AMP binding"/>
    <property type="evidence" value="ECO:0007669"/>
    <property type="project" value="TreeGrafter"/>
</dbReference>
<dbReference type="GO" id="GO:0006168">
    <property type="term" value="P:adenine salvage"/>
    <property type="evidence" value="ECO:0007669"/>
    <property type="project" value="InterPro"/>
</dbReference>
<dbReference type="GO" id="GO:0044209">
    <property type="term" value="P:AMP salvage"/>
    <property type="evidence" value="ECO:0007669"/>
    <property type="project" value="UniProtKB-UniRule"/>
</dbReference>
<dbReference type="GO" id="GO:0006166">
    <property type="term" value="P:purine ribonucleoside salvage"/>
    <property type="evidence" value="ECO:0007669"/>
    <property type="project" value="UniProtKB-KW"/>
</dbReference>
<dbReference type="CDD" id="cd06223">
    <property type="entry name" value="PRTases_typeI"/>
    <property type="match status" value="1"/>
</dbReference>
<dbReference type="FunFam" id="3.40.50.2020:FF:000021">
    <property type="entry name" value="Adenine phosphoribosyltransferase"/>
    <property type="match status" value="1"/>
</dbReference>
<dbReference type="Gene3D" id="3.40.50.2020">
    <property type="match status" value="1"/>
</dbReference>
<dbReference type="HAMAP" id="MF_00004">
    <property type="entry name" value="Aden_phosphoribosyltr"/>
    <property type="match status" value="1"/>
</dbReference>
<dbReference type="InterPro" id="IPR005764">
    <property type="entry name" value="Ade_phspho_trans"/>
</dbReference>
<dbReference type="InterPro" id="IPR000836">
    <property type="entry name" value="PRibTrfase_dom"/>
</dbReference>
<dbReference type="InterPro" id="IPR029057">
    <property type="entry name" value="PRTase-like"/>
</dbReference>
<dbReference type="InterPro" id="IPR050054">
    <property type="entry name" value="UPRTase/APRTase"/>
</dbReference>
<dbReference type="NCBIfam" id="NF002634">
    <property type="entry name" value="PRK02304.1-3"/>
    <property type="match status" value="1"/>
</dbReference>
<dbReference type="NCBIfam" id="NF002636">
    <property type="entry name" value="PRK02304.1-5"/>
    <property type="match status" value="1"/>
</dbReference>
<dbReference type="PANTHER" id="PTHR32315">
    <property type="entry name" value="ADENINE PHOSPHORIBOSYLTRANSFERASE"/>
    <property type="match status" value="1"/>
</dbReference>
<dbReference type="PANTHER" id="PTHR32315:SF3">
    <property type="entry name" value="ADENINE PHOSPHORIBOSYLTRANSFERASE"/>
    <property type="match status" value="1"/>
</dbReference>
<dbReference type="Pfam" id="PF00156">
    <property type="entry name" value="Pribosyltran"/>
    <property type="match status" value="1"/>
</dbReference>
<dbReference type="SUPFAM" id="SSF53271">
    <property type="entry name" value="PRTase-like"/>
    <property type="match status" value="1"/>
</dbReference>
<dbReference type="PROSITE" id="PS00103">
    <property type="entry name" value="PUR_PYR_PR_TRANSFER"/>
    <property type="match status" value="1"/>
</dbReference>
<sequence>MTDISKVIASLMREVPDFPEPGIQFKDLTPLLADAEGLMAVTDALAATAEGADLVAGIDARGFLLGAAVALRLGTGVLAVRKGGKLPPPVHSQTYNLEYGSATLEIPADGLDIAGRSVVIIDDVLATGGTVAATHRLLTSGGATVLHAAVVLELTALGGREVVQPLSVSSLYTV</sequence>
<evidence type="ECO:0000255" key="1">
    <source>
        <dbReference type="HAMAP-Rule" id="MF_00004"/>
    </source>
</evidence>
<organism>
    <name type="scientific">Mycobacterium sp. (strain JLS)</name>
    <dbReference type="NCBI Taxonomy" id="164757"/>
    <lineage>
        <taxon>Bacteria</taxon>
        <taxon>Bacillati</taxon>
        <taxon>Actinomycetota</taxon>
        <taxon>Actinomycetes</taxon>
        <taxon>Mycobacteriales</taxon>
        <taxon>Mycobacteriaceae</taxon>
        <taxon>Mycobacterium</taxon>
    </lineage>
</organism>
<gene>
    <name evidence="1" type="primary">apt</name>
    <name type="ordered locus">Mjls_2318</name>
</gene>
<comment type="function">
    <text evidence="1">Catalyzes a salvage reaction resulting in the formation of AMP, that is energically less costly than de novo synthesis.</text>
</comment>
<comment type="catalytic activity">
    <reaction evidence="1">
        <text>AMP + diphosphate = 5-phospho-alpha-D-ribose 1-diphosphate + adenine</text>
        <dbReference type="Rhea" id="RHEA:16609"/>
        <dbReference type="ChEBI" id="CHEBI:16708"/>
        <dbReference type="ChEBI" id="CHEBI:33019"/>
        <dbReference type="ChEBI" id="CHEBI:58017"/>
        <dbReference type="ChEBI" id="CHEBI:456215"/>
        <dbReference type="EC" id="2.4.2.7"/>
    </reaction>
</comment>
<comment type="pathway">
    <text evidence="1">Purine metabolism; AMP biosynthesis via salvage pathway; AMP from adenine: step 1/1.</text>
</comment>
<comment type="subunit">
    <text evidence="1">Homodimer.</text>
</comment>
<comment type="subcellular location">
    <subcellularLocation>
        <location evidence="1">Cytoplasm</location>
    </subcellularLocation>
</comment>
<comment type="similarity">
    <text evidence="1">Belongs to the purine/pyrimidine phosphoribosyltransferase family.</text>
</comment>
<protein>
    <recommendedName>
        <fullName evidence="1">Adenine phosphoribosyltransferase</fullName>
        <shortName evidence="1">APRT</shortName>
        <ecNumber evidence="1">2.4.2.7</ecNumber>
    </recommendedName>
</protein>
<keyword id="KW-0963">Cytoplasm</keyword>
<keyword id="KW-0328">Glycosyltransferase</keyword>
<keyword id="KW-0660">Purine salvage</keyword>
<keyword id="KW-0808">Transferase</keyword>
<reference key="1">
    <citation type="submission" date="2007-02" db="EMBL/GenBank/DDBJ databases">
        <title>Complete sequence of Mycobacterium sp. JLS.</title>
        <authorList>
            <consortium name="US DOE Joint Genome Institute"/>
            <person name="Copeland A."/>
            <person name="Lucas S."/>
            <person name="Lapidus A."/>
            <person name="Barry K."/>
            <person name="Detter J.C."/>
            <person name="Glavina del Rio T."/>
            <person name="Hammon N."/>
            <person name="Israni S."/>
            <person name="Dalin E."/>
            <person name="Tice H."/>
            <person name="Pitluck S."/>
            <person name="Chain P."/>
            <person name="Malfatti S."/>
            <person name="Shin M."/>
            <person name="Vergez L."/>
            <person name="Schmutz J."/>
            <person name="Larimer F."/>
            <person name="Land M."/>
            <person name="Hauser L."/>
            <person name="Kyrpides N."/>
            <person name="Mikhailova N."/>
            <person name="Miller C.D."/>
            <person name="Anderson A.J."/>
            <person name="Sims R.C."/>
            <person name="Richardson P."/>
        </authorList>
    </citation>
    <scope>NUCLEOTIDE SEQUENCE [LARGE SCALE GENOMIC DNA]</scope>
    <source>
        <strain>JLS</strain>
    </source>
</reference>
<accession>A3PYX7</accession>
<name>APT_MYCSJ</name>